<comment type="function">
    <text evidence="1">Involved in control of the biosynthesis of leucine.</text>
</comment>
<feature type="peptide" id="PRO_0000043998" description="leu operon leader peptide">
    <location>
        <begin position="1"/>
        <end position="28"/>
    </location>
</feature>
<evidence type="ECO:0000250" key="1"/>
<sequence>MSYIVRFTGLLLLNAFIVRGRPVGGIQH</sequence>
<proteinExistence type="inferred from homology"/>
<organism>
    <name type="scientific">Salmonella typhi</name>
    <dbReference type="NCBI Taxonomy" id="90370"/>
    <lineage>
        <taxon>Bacteria</taxon>
        <taxon>Pseudomonadati</taxon>
        <taxon>Pseudomonadota</taxon>
        <taxon>Gammaproteobacteria</taxon>
        <taxon>Enterobacterales</taxon>
        <taxon>Enterobacteriaceae</taxon>
        <taxon>Salmonella</taxon>
    </lineage>
</organism>
<reference key="1">
    <citation type="journal article" date="2001" name="Nature">
        <title>Complete genome sequence of a multiple drug resistant Salmonella enterica serovar Typhi CT18.</title>
        <authorList>
            <person name="Parkhill J."/>
            <person name="Dougan G."/>
            <person name="James K.D."/>
            <person name="Thomson N.R."/>
            <person name="Pickard D."/>
            <person name="Wain J."/>
            <person name="Churcher C.M."/>
            <person name="Mungall K.L."/>
            <person name="Bentley S.D."/>
            <person name="Holden M.T.G."/>
            <person name="Sebaihia M."/>
            <person name="Baker S."/>
            <person name="Basham D."/>
            <person name="Brooks K."/>
            <person name="Chillingworth T."/>
            <person name="Connerton P."/>
            <person name="Cronin A."/>
            <person name="Davis P."/>
            <person name="Davies R.M."/>
            <person name="Dowd L."/>
            <person name="White N."/>
            <person name="Farrar J."/>
            <person name="Feltwell T."/>
            <person name="Hamlin N."/>
            <person name="Haque A."/>
            <person name="Hien T.T."/>
            <person name="Holroyd S."/>
            <person name="Jagels K."/>
            <person name="Krogh A."/>
            <person name="Larsen T.S."/>
            <person name="Leather S."/>
            <person name="Moule S."/>
            <person name="O'Gaora P."/>
            <person name="Parry C."/>
            <person name="Quail M.A."/>
            <person name="Rutherford K.M."/>
            <person name="Simmonds M."/>
            <person name="Skelton J."/>
            <person name="Stevens K."/>
            <person name="Whitehead S."/>
            <person name="Barrell B.G."/>
        </authorList>
    </citation>
    <scope>NUCLEOTIDE SEQUENCE [LARGE SCALE GENOMIC DNA]</scope>
    <source>
        <strain>CT18</strain>
    </source>
</reference>
<reference key="2">
    <citation type="journal article" date="2003" name="J. Bacteriol.">
        <title>Comparative genomics of Salmonella enterica serovar Typhi strains Ty2 and CT18.</title>
        <authorList>
            <person name="Deng W."/>
            <person name="Liou S.-R."/>
            <person name="Plunkett G. III"/>
            <person name="Mayhew G.F."/>
            <person name="Rose D.J."/>
            <person name="Burland V."/>
            <person name="Kodoyianni V."/>
            <person name="Schwartz D.C."/>
            <person name="Blattner F.R."/>
        </authorList>
    </citation>
    <scope>NUCLEOTIDE SEQUENCE [LARGE SCALE GENOMIC DNA]</scope>
    <source>
        <strain>ATCC 700931 / Ty2</strain>
    </source>
</reference>
<gene>
    <name type="primary">leuL</name>
    <name type="ordered locus">STY0133</name>
    <name type="ordered locus">t0118</name>
</gene>
<name>LPL_SALTI</name>
<accession>Q8Z9H9</accession>
<protein>
    <recommendedName>
        <fullName>leu operon leader peptide</fullName>
    </recommendedName>
    <alternativeName>
        <fullName>leu operon attenuator peptide</fullName>
    </alternativeName>
</protein>
<dbReference type="EMBL" id="AL513382">
    <property type="protein sequence ID" value="CAD01271.1"/>
    <property type="molecule type" value="Genomic_DNA"/>
</dbReference>
<dbReference type="EMBL" id="AE014613">
    <property type="protein sequence ID" value="AAO67850.1"/>
    <property type="molecule type" value="Genomic_DNA"/>
</dbReference>
<dbReference type="RefSeq" id="NP_454726.1">
    <property type="nucleotide sequence ID" value="NC_003198.1"/>
</dbReference>
<dbReference type="RefSeq" id="WP_001762463.1">
    <property type="nucleotide sequence ID" value="NZ_WSUR01000009.1"/>
</dbReference>
<dbReference type="STRING" id="220341.gene:17584173"/>
<dbReference type="KEGG" id="stt:t0118"/>
<dbReference type="KEGG" id="sty:STY0133"/>
<dbReference type="PATRIC" id="fig|90370.929.peg.4210"/>
<dbReference type="HOGENOM" id="CLU_221572_0_0_6"/>
<dbReference type="Proteomes" id="UP000000541">
    <property type="component" value="Chromosome"/>
</dbReference>
<dbReference type="Proteomes" id="UP000002670">
    <property type="component" value="Chromosome"/>
</dbReference>
<dbReference type="GO" id="GO:0009098">
    <property type="term" value="P:L-leucine biosynthetic process"/>
    <property type="evidence" value="ECO:0007669"/>
    <property type="project" value="UniProtKB-KW"/>
</dbReference>
<dbReference type="InterPro" id="IPR012570">
    <property type="entry name" value="Leu_leader"/>
</dbReference>
<dbReference type="NCBIfam" id="NF011328">
    <property type="entry name" value="PRK14744.1"/>
    <property type="match status" value="1"/>
</dbReference>
<dbReference type="Pfam" id="PF08054">
    <property type="entry name" value="Leu_leader"/>
    <property type="match status" value="1"/>
</dbReference>
<keyword id="KW-0028">Amino-acid biosynthesis</keyword>
<keyword id="KW-0100">Branched-chain amino acid biosynthesis</keyword>
<keyword id="KW-0428">Leader peptide</keyword>
<keyword id="KW-0432">Leucine biosynthesis</keyword>